<feature type="chain" id="PRO_1000081345" description="Small ribosomal subunit protein eS4">
    <location>
        <begin position="1"/>
        <end position="237"/>
    </location>
</feature>
<feature type="domain" description="S4 RNA-binding" evidence="1">
    <location>
        <begin position="37"/>
        <end position="99"/>
    </location>
</feature>
<protein>
    <recommendedName>
        <fullName evidence="1">Small ribosomal subunit protein eS4</fullName>
    </recommendedName>
    <alternativeName>
        <fullName evidence="2">30S ribosomal protein S4e</fullName>
    </alternativeName>
</protein>
<gene>
    <name evidence="1" type="primary">rps4e</name>
    <name type="ordered locus">NP_4878A</name>
</gene>
<sequence>MTNHQKRLAVPKSWPVERKEEAYTTKAAAGPHGEEGVPLLIVLRDVLGYVDSKKEARYALEQDSILINGTAVSDERRPVGMFDILAFDEREEYYRIFPDEGGRLSLTPIDEDAAGSKLGKIVGKTQVAGGDTQLSLHDGETLLVEDATAYDTNDSIVVSNDGEEIVAHFTYEEGALVTAVSGAHAGRIGTIDEIQVTPGSSANNVLIDAENDDERFETVEEYVVVIDENFTDGGDDE</sequence>
<evidence type="ECO:0000255" key="1">
    <source>
        <dbReference type="HAMAP-Rule" id="MF_00485"/>
    </source>
</evidence>
<evidence type="ECO:0000305" key="2"/>
<keyword id="KW-1185">Reference proteome</keyword>
<keyword id="KW-0687">Ribonucleoprotein</keyword>
<keyword id="KW-0689">Ribosomal protein</keyword>
<keyword id="KW-0694">RNA-binding</keyword>
<keyword id="KW-0699">rRNA-binding</keyword>
<proteinExistence type="inferred from homology"/>
<accession>Q3IMX6</accession>
<reference key="1">
    <citation type="journal article" date="2005" name="Genome Res.">
        <title>Living with two extremes: conclusions from the genome sequence of Natronomonas pharaonis.</title>
        <authorList>
            <person name="Falb M."/>
            <person name="Pfeiffer F."/>
            <person name="Palm P."/>
            <person name="Rodewald K."/>
            <person name="Hickmann V."/>
            <person name="Tittor J."/>
            <person name="Oesterhelt D."/>
        </authorList>
    </citation>
    <scope>NUCLEOTIDE SEQUENCE [LARGE SCALE GENOMIC DNA]</scope>
    <source>
        <strain>ATCC 35678 / DSM 2160 / CIP 103997 / JCM 8858 / NBRC 14720 / NCIMB 2260 / Gabara</strain>
    </source>
</reference>
<dbReference type="EMBL" id="CR936257">
    <property type="protein sequence ID" value="CAI50530.1"/>
    <property type="molecule type" value="Genomic_DNA"/>
</dbReference>
<dbReference type="RefSeq" id="WP_011324142.1">
    <property type="nucleotide sequence ID" value="NC_007426.1"/>
</dbReference>
<dbReference type="SMR" id="Q3IMX6"/>
<dbReference type="STRING" id="348780.NP_4878A"/>
<dbReference type="EnsemblBacteria" id="CAI50530">
    <property type="protein sequence ID" value="CAI50530"/>
    <property type="gene ID" value="NP_4878A"/>
</dbReference>
<dbReference type="GeneID" id="3703183"/>
<dbReference type="KEGG" id="nph:NP_4878A"/>
<dbReference type="eggNOG" id="arCOG04093">
    <property type="taxonomic scope" value="Archaea"/>
</dbReference>
<dbReference type="HOGENOM" id="CLU_060400_0_0_2"/>
<dbReference type="OrthoDB" id="372073at2157"/>
<dbReference type="Proteomes" id="UP000002698">
    <property type="component" value="Chromosome"/>
</dbReference>
<dbReference type="GO" id="GO:0022627">
    <property type="term" value="C:cytosolic small ribosomal subunit"/>
    <property type="evidence" value="ECO:0007669"/>
    <property type="project" value="TreeGrafter"/>
</dbReference>
<dbReference type="GO" id="GO:0019843">
    <property type="term" value="F:rRNA binding"/>
    <property type="evidence" value="ECO:0007669"/>
    <property type="project" value="UniProtKB-KW"/>
</dbReference>
<dbReference type="GO" id="GO:0003735">
    <property type="term" value="F:structural constituent of ribosome"/>
    <property type="evidence" value="ECO:0007669"/>
    <property type="project" value="InterPro"/>
</dbReference>
<dbReference type="GO" id="GO:0006412">
    <property type="term" value="P:translation"/>
    <property type="evidence" value="ECO:0007669"/>
    <property type="project" value="UniProtKB-UniRule"/>
</dbReference>
<dbReference type="CDD" id="cd06087">
    <property type="entry name" value="KOW_RPS4"/>
    <property type="match status" value="1"/>
</dbReference>
<dbReference type="Gene3D" id="2.30.30.30">
    <property type="match status" value="1"/>
</dbReference>
<dbReference type="Gene3D" id="2.40.50.740">
    <property type="match status" value="1"/>
</dbReference>
<dbReference type="Gene3D" id="3.10.290.10">
    <property type="entry name" value="RNA-binding S4 domain"/>
    <property type="match status" value="1"/>
</dbReference>
<dbReference type="HAMAP" id="MF_00485">
    <property type="entry name" value="Ribosomal_eS4"/>
    <property type="match status" value="1"/>
</dbReference>
<dbReference type="InterPro" id="IPR014722">
    <property type="entry name" value="Rib_uL2_dom2"/>
</dbReference>
<dbReference type="InterPro" id="IPR000876">
    <property type="entry name" value="Ribosomal_eS4"/>
</dbReference>
<dbReference type="InterPro" id="IPR013845">
    <property type="entry name" value="Ribosomal_eS4_central_region"/>
</dbReference>
<dbReference type="InterPro" id="IPR038237">
    <property type="entry name" value="Ribosomal_eS4_central_sf"/>
</dbReference>
<dbReference type="InterPro" id="IPR041982">
    <property type="entry name" value="Ribosomal_eS4_KOW"/>
</dbReference>
<dbReference type="InterPro" id="IPR013843">
    <property type="entry name" value="Ribosomal_eS4_N"/>
</dbReference>
<dbReference type="InterPro" id="IPR018199">
    <property type="entry name" value="Ribosomal_eS4_N_CS"/>
</dbReference>
<dbReference type="InterPro" id="IPR036986">
    <property type="entry name" value="S4_RNA-bd_sf"/>
</dbReference>
<dbReference type="NCBIfam" id="NF003312">
    <property type="entry name" value="PRK04313.1"/>
    <property type="match status" value="1"/>
</dbReference>
<dbReference type="PANTHER" id="PTHR11581">
    <property type="entry name" value="30S/40S RIBOSOMAL PROTEIN S4"/>
    <property type="match status" value="1"/>
</dbReference>
<dbReference type="PANTHER" id="PTHR11581:SF0">
    <property type="entry name" value="SMALL RIBOSOMAL SUBUNIT PROTEIN ES4"/>
    <property type="match status" value="1"/>
</dbReference>
<dbReference type="Pfam" id="PF00900">
    <property type="entry name" value="Ribosomal_S4e"/>
    <property type="match status" value="1"/>
</dbReference>
<dbReference type="Pfam" id="PF08071">
    <property type="entry name" value="RS4NT"/>
    <property type="match status" value="1"/>
</dbReference>
<dbReference type="PIRSF" id="PIRSF002116">
    <property type="entry name" value="Ribosomal_S4"/>
    <property type="match status" value="1"/>
</dbReference>
<dbReference type="SUPFAM" id="SSF55174">
    <property type="entry name" value="Alpha-L RNA-binding motif"/>
    <property type="match status" value="1"/>
</dbReference>
<dbReference type="PROSITE" id="PS00528">
    <property type="entry name" value="RIBOSOMAL_S4E"/>
    <property type="match status" value="1"/>
</dbReference>
<dbReference type="PROSITE" id="PS50889">
    <property type="entry name" value="S4"/>
    <property type="match status" value="1"/>
</dbReference>
<comment type="similarity">
    <text evidence="1">Belongs to the eukaryotic ribosomal protein eS4 family.</text>
</comment>
<name>RS4E_NATPD</name>
<organism>
    <name type="scientific">Natronomonas pharaonis (strain ATCC 35678 / DSM 2160 / CIP 103997 / JCM 8858 / NBRC 14720 / NCIMB 2260 / Gabara)</name>
    <name type="common">Halobacterium pharaonis</name>
    <dbReference type="NCBI Taxonomy" id="348780"/>
    <lineage>
        <taxon>Archaea</taxon>
        <taxon>Methanobacteriati</taxon>
        <taxon>Methanobacteriota</taxon>
        <taxon>Stenosarchaea group</taxon>
        <taxon>Halobacteria</taxon>
        <taxon>Halobacteriales</taxon>
        <taxon>Haloarculaceae</taxon>
        <taxon>Natronomonas</taxon>
    </lineage>
</organism>